<organism>
    <name type="scientific">Xylella fastidiosa (strain M12)</name>
    <dbReference type="NCBI Taxonomy" id="405440"/>
    <lineage>
        <taxon>Bacteria</taxon>
        <taxon>Pseudomonadati</taxon>
        <taxon>Pseudomonadota</taxon>
        <taxon>Gammaproteobacteria</taxon>
        <taxon>Lysobacterales</taxon>
        <taxon>Lysobacteraceae</taxon>
        <taxon>Xylella</taxon>
    </lineage>
</organism>
<gene>
    <name evidence="1" type="primary">ahcY</name>
    <name type="ordered locus">Xfasm12_0349</name>
</gene>
<dbReference type="EC" id="3.13.2.1" evidence="1"/>
<dbReference type="EMBL" id="CP000941">
    <property type="protein sequence ID" value="ACA11366.1"/>
    <property type="molecule type" value="Genomic_DNA"/>
</dbReference>
<dbReference type="RefSeq" id="WP_012337628.1">
    <property type="nucleotide sequence ID" value="NC_010513.1"/>
</dbReference>
<dbReference type="SMR" id="B0U232"/>
<dbReference type="KEGG" id="xfm:Xfasm12_0349"/>
<dbReference type="HOGENOM" id="CLU_025194_2_1_6"/>
<dbReference type="UniPathway" id="UPA00314">
    <property type="reaction ID" value="UER00076"/>
</dbReference>
<dbReference type="GO" id="GO:0005829">
    <property type="term" value="C:cytosol"/>
    <property type="evidence" value="ECO:0007669"/>
    <property type="project" value="TreeGrafter"/>
</dbReference>
<dbReference type="GO" id="GO:0004013">
    <property type="term" value="F:adenosylhomocysteinase activity"/>
    <property type="evidence" value="ECO:0007669"/>
    <property type="project" value="UniProtKB-UniRule"/>
</dbReference>
<dbReference type="GO" id="GO:0071269">
    <property type="term" value="P:L-homocysteine biosynthetic process"/>
    <property type="evidence" value="ECO:0007669"/>
    <property type="project" value="UniProtKB-UniRule"/>
</dbReference>
<dbReference type="GO" id="GO:0006730">
    <property type="term" value="P:one-carbon metabolic process"/>
    <property type="evidence" value="ECO:0007669"/>
    <property type="project" value="UniProtKB-KW"/>
</dbReference>
<dbReference type="GO" id="GO:0033353">
    <property type="term" value="P:S-adenosylmethionine cycle"/>
    <property type="evidence" value="ECO:0007669"/>
    <property type="project" value="TreeGrafter"/>
</dbReference>
<dbReference type="CDD" id="cd00401">
    <property type="entry name" value="SAHH"/>
    <property type="match status" value="1"/>
</dbReference>
<dbReference type="FunFam" id="3.40.50.720:FF:000004">
    <property type="entry name" value="Adenosylhomocysteinase"/>
    <property type="match status" value="1"/>
</dbReference>
<dbReference type="Gene3D" id="3.40.50.1480">
    <property type="entry name" value="Adenosylhomocysteinase-like"/>
    <property type="match status" value="1"/>
</dbReference>
<dbReference type="Gene3D" id="3.40.50.720">
    <property type="entry name" value="NAD(P)-binding Rossmann-like Domain"/>
    <property type="match status" value="1"/>
</dbReference>
<dbReference type="HAMAP" id="MF_00563">
    <property type="entry name" value="AdoHcyase"/>
    <property type="match status" value="1"/>
</dbReference>
<dbReference type="InterPro" id="IPR042172">
    <property type="entry name" value="Adenosylhomocyst_ase-like_sf"/>
</dbReference>
<dbReference type="InterPro" id="IPR000043">
    <property type="entry name" value="Adenosylhomocysteinase-like"/>
</dbReference>
<dbReference type="InterPro" id="IPR015878">
    <property type="entry name" value="Ado_hCys_hydrolase_NAD-bd"/>
</dbReference>
<dbReference type="InterPro" id="IPR036291">
    <property type="entry name" value="NAD(P)-bd_dom_sf"/>
</dbReference>
<dbReference type="InterPro" id="IPR020082">
    <property type="entry name" value="S-Ado-L-homoCys_hydrolase_CS"/>
</dbReference>
<dbReference type="NCBIfam" id="TIGR00936">
    <property type="entry name" value="ahcY"/>
    <property type="match status" value="1"/>
</dbReference>
<dbReference type="NCBIfam" id="NF004005">
    <property type="entry name" value="PRK05476.2-3"/>
    <property type="match status" value="1"/>
</dbReference>
<dbReference type="PANTHER" id="PTHR23420">
    <property type="entry name" value="ADENOSYLHOMOCYSTEINASE"/>
    <property type="match status" value="1"/>
</dbReference>
<dbReference type="PANTHER" id="PTHR23420:SF0">
    <property type="entry name" value="ADENOSYLHOMOCYSTEINASE"/>
    <property type="match status" value="1"/>
</dbReference>
<dbReference type="Pfam" id="PF05221">
    <property type="entry name" value="AdoHcyase"/>
    <property type="match status" value="1"/>
</dbReference>
<dbReference type="Pfam" id="PF00670">
    <property type="entry name" value="AdoHcyase_NAD"/>
    <property type="match status" value="1"/>
</dbReference>
<dbReference type="PIRSF" id="PIRSF001109">
    <property type="entry name" value="Ad_hcy_hydrolase"/>
    <property type="match status" value="1"/>
</dbReference>
<dbReference type="SMART" id="SM00996">
    <property type="entry name" value="AdoHcyase"/>
    <property type="match status" value="1"/>
</dbReference>
<dbReference type="SMART" id="SM00997">
    <property type="entry name" value="AdoHcyase_NAD"/>
    <property type="match status" value="1"/>
</dbReference>
<dbReference type="SUPFAM" id="SSF52283">
    <property type="entry name" value="Formate/glycerate dehydrogenase catalytic domain-like"/>
    <property type="match status" value="1"/>
</dbReference>
<dbReference type="SUPFAM" id="SSF51735">
    <property type="entry name" value="NAD(P)-binding Rossmann-fold domains"/>
    <property type="match status" value="1"/>
</dbReference>
<dbReference type="PROSITE" id="PS00738">
    <property type="entry name" value="ADOHCYASE_1"/>
    <property type="match status" value="1"/>
</dbReference>
<dbReference type="PROSITE" id="PS00739">
    <property type="entry name" value="ADOHCYASE_2"/>
    <property type="match status" value="1"/>
</dbReference>
<sequence>MNTHPQTSPNTHYKIADISLADWGRKEIDIAEHEMPGLMSIRRKYASKQPLKGVRVTGSLHMTIQTAVLIETLKDIGANVRWASCNIFSTQDHAAAAIATSGTPVFAWKGETLEEYWDCTLQALTFTLADGTLTGPELIVDDGGDATLLIHKGYELENGSTWVDEPSDSLEEQVIKRLLKRIAIERPGYWTRVVNDWKGVSEETTTGVHRLYQIAATGRLLVPAINVNDSVTKSKFDNLYGCRESLADGLKRAMDVMLAGKLAVVCGYGDVGKGSAHSLRAYGARVIVTEIDPICALQAAMEGFEVRTVEDTLGQADIYVTTTGNKDVIRIEHMTAMKDQVIVCNIGHFDNEIQVDALNTLTGVQKINIKPQVDKFILPNGNTLFLLAEGRLVNLGCATGHPSFVMSNSFANQTLAQIDLWQNKDVYEKNVYRLPKKLDEEVARLHLEKIGVKLTTLTANQAAYLGISVEGPFKPEHYRY</sequence>
<keyword id="KW-0963">Cytoplasm</keyword>
<keyword id="KW-0378">Hydrolase</keyword>
<keyword id="KW-0520">NAD</keyword>
<keyword id="KW-0554">One-carbon metabolism</keyword>
<reference key="1">
    <citation type="journal article" date="2010" name="J. Bacteriol.">
        <title>Whole genome sequences of two Xylella fastidiosa strains (M12 and M23) causing almond leaf scorch disease in California.</title>
        <authorList>
            <person name="Chen J."/>
            <person name="Xie G."/>
            <person name="Han S."/>
            <person name="Chertkov O."/>
            <person name="Sims D."/>
            <person name="Civerolo E.L."/>
        </authorList>
    </citation>
    <scope>NUCLEOTIDE SEQUENCE [LARGE SCALE GENOMIC DNA]</scope>
    <source>
        <strain>M12</strain>
    </source>
</reference>
<name>SAHH_XYLFM</name>
<comment type="function">
    <text evidence="1">May play a key role in the regulation of the intracellular concentration of adenosylhomocysteine.</text>
</comment>
<comment type="catalytic activity">
    <reaction evidence="1">
        <text>S-adenosyl-L-homocysteine + H2O = L-homocysteine + adenosine</text>
        <dbReference type="Rhea" id="RHEA:21708"/>
        <dbReference type="ChEBI" id="CHEBI:15377"/>
        <dbReference type="ChEBI" id="CHEBI:16335"/>
        <dbReference type="ChEBI" id="CHEBI:57856"/>
        <dbReference type="ChEBI" id="CHEBI:58199"/>
        <dbReference type="EC" id="3.13.2.1"/>
    </reaction>
</comment>
<comment type="cofactor">
    <cofactor evidence="1">
        <name>NAD(+)</name>
        <dbReference type="ChEBI" id="CHEBI:57540"/>
    </cofactor>
    <text evidence="1">Binds 1 NAD(+) per subunit.</text>
</comment>
<comment type="pathway">
    <text evidence="1">Amino-acid biosynthesis; L-homocysteine biosynthesis; L-homocysteine from S-adenosyl-L-homocysteine: step 1/1.</text>
</comment>
<comment type="subcellular location">
    <subcellularLocation>
        <location evidence="1">Cytoplasm</location>
    </subcellularLocation>
</comment>
<comment type="similarity">
    <text evidence="1">Belongs to the adenosylhomocysteinase family.</text>
</comment>
<protein>
    <recommendedName>
        <fullName evidence="1">Adenosylhomocysteinase</fullName>
        <ecNumber evidence="1">3.13.2.1</ecNumber>
    </recommendedName>
    <alternativeName>
        <fullName evidence="1">S-adenosyl-L-homocysteine hydrolase</fullName>
        <shortName evidence="1">AdoHcyase</shortName>
    </alternativeName>
</protein>
<proteinExistence type="inferred from homology"/>
<evidence type="ECO:0000255" key="1">
    <source>
        <dbReference type="HAMAP-Rule" id="MF_00563"/>
    </source>
</evidence>
<accession>B0U232</accession>
<feature type="chain" id="PRO_1000129305" description="Adenosylhomocysteinase">
    <location>
        <begin position="1"/>
        <end position="480"/>
    </location>
</feature>
<feature type="binding site" evidence="1">
    <location>
        <position position="63"/>
    </location>
    <ligand>
        <name>substrate</name>
    </ligand>
</feature>
<feature type="binding site" evidence="1">
    <location>
        <position position="142"/>
    </location>
    <ligand>
        <name>substrate</name>
    </ligand>
</feature>
<feature type="binding site" evidence="1">
    <location>
        <position position="203"/>
    </location>
    <ligand>
        <name>substrate</name>
    </ligand>
</feature>
<feature type="binding site" evidence="1">
    <location>
        <begin position="204"/>
        <end position="206"/>
    </location>
    <ligand>
        <name>NAD(+)</name>
        <dbReference type="ChEBI" id="CHEBI:57540"/>
    </ligand>
</feature>
<feature type="binding site" evidence="1">
    <location>
        <position position="233"/>
    </location>
    <ligand>
        <name>substrate</name>
    </ligand>
</feature>
<feature type="binding site" evidence="1">
    <location>
        <position position="237"/>
    </location>
    <ligand>
        <name>substrate</name>
    </ligand>
</feature>
<feature type="binding site" evidence="1">
    <location>
        <position position="238"/>
    </location>
    <ligand>
        <name>NAD(+)</name>
        <dbReference type="ChEBI" id="CHEBI:57540"/>
    </ligand>
</feature>
<feature type="binding site" evidence="1">
    <location>
        <begin position="267"/>
        <end position="272"/>
    </location>
    <ligand>
        <name>NAD(+)</name>
        <dbReference type="ChEBI" id="CHEBI:57540"/>
    </ligand>
</feature>
<feature type="binding site" evidence="1">
    <location>
        <position position="290"/>
    </location>
    <ligand>
        <name>NAD(+)</name>
        <dbReference type="ChEBI" id="CHEBI:57540"/>
    </ligand>
</feature>
<feature type="binding site" evidence="1">
    <location>
        <position position="325"/>
    </location>
    <ligand>
        <name>NAD(+)</name>
        <dbReference type="ChEBI" id="CHEBI:57540"/>
    </ligand>
</feature>
<feature type="binding site" evidence="1">
    <location>
        <begin position="346"/>
        <end position="348"/>
    </location>
    <ligand>
        <name>NAD(+)</name>
        <dbReference type="ChEBI" id="CHEBI:57540"/>
    </ligand>
</feature>
<feature type="binding site" evidence="1">
    <location>
        <position position="394"/>
    </location>
    <ligand>
        <name>NAD(+)</name>
        <dbReference type="ChEBI" id="CHEBI:57540"/>
    </ligand>
</feature>